<gene>
    <name type="primary">Dcc</name>
</gene>
<reference key="1">
    <citation type="journal article" date="1996" name="Cell">
        <title>Deleted in colorectal cancer (DCC) encodes a netrin receptor.</title>
        <authorList>
            <person name="Keino-Masu K."/>
            <person name="Masu M."/>
            <person name="Hinck L."/>
            <person name="Leonardo E.D."/>
            <person name="Chan S.S.-Y."/>
            <person name="Culotti J.G."/>
            <person name="Tessier-Lavigne M."/>
        </authorList>
    </citation>
    <scope>NUCLEOTIDE SEQUENCE [MRNA]</scope>
    <scope>FUNCTION</scope>
    <scope>INTERACTION WITH NTN1</scope>
    <scope>SUBCELLULAR LOCATION</scope>
    <scope>TISSUE SPECIFICITY</scope>
</reference>
<reference key="2">
    <citation type="journal article" date="2004" name="Nature">
        <title>Genome sequence of the Brown Norway rat yields insights into mammalian evolution.</title>
        <authorList>
            <person name="Gibbs R.A."/>
            <person name="Weinstock G.M."/>
            <person name="Metzker M.L."/>
            <person name="Muzny D.M."/>
            <person name="Sodergren E.J."/>
            <person name="Scherer S."/>
            <person name="Scott G."/>
            <person name="Steffen D."/>
            <person name="Worley K.C."/>
            <person name="Burch P.E."/>
            <person name="Okwuonu G."/>
            <person name="Hines S."/>
            <person name="Lewis L."/>
            <person name="Deramo C."/>
            <person name="Delgado O."/>
            <person name="Dugan-Rocha S."/>
            <person name="Miner G."/>
            <person name="Morgan M."/>
            <person name="Hawes A."/>
            <person name="Gill R."/>
            <person name="Holt R.A."/>
            <person name="Adams M.D."/>
            <person name="Amanatides P.G."/>
            <person name="Baden-Tillson H."/>
            <person name="Barnstead M."/>
            <person name="Chin S."/>
            <person name="Evans C.A."/>
            <person name="Ferriera S."/>
            <person name="Fosler C."/>
            <person name="Glodek A."/>
            <person name="Gu Z."/>
            <person name="Jennings D."/>
            <person name="Kraft C.L."/>
            <person name="Nguyen T."/>
            <person name="Pfannkoch C.M."/>
            <person name="Sitter C."/>
            <person name="Sutton G.G."/>
            <person name="Venter J.C."/>
            <person name="Woodage T."/>
            <person name="Smith D."/>
            <person name="Lee H.-M."/>
            <person name="Gustafson E."/>
            <person name="Cahill P."/>
            <person name="Kana A."/>
            <person name="Doucette-Stamm L."/>
            <person name="Weinstock K."/>
            <person name="Fechtel K."/>
            <person name="Weiss R.B."/>
            <person name="Dunn D.M."/>
            <person name="Green E.D."/>
            <person name="Blakesley R.W."/>
            <person name="Bouffard G.G."/>
            <person name="De Jong P.J."/>
            <person name="Osoegawa K."/>
            <person name="Zhu B."/>
            <person name="Marra M."/>
            <person name="Schein J."/>
            <person name="Bosdet I."/>
            <person name="Fjell C."/>
            <person name="Jones S."/>
            <person name="Krzywinski M."/>
            <person name="Mathewson C."/>
            <person name="Siddiqui A."/>
            <person name="Wye N."/>
            <person name="McPherson J."/>
            <person name="Zhao S."/>
            <person name="Fraser C.M."/>
            <person name="Shetty J."/>
            <person name="Shatsman S."/>
            <person name="Geer K."/>
            <person name="Chen Y."/>
            <person name="Abramzon S."/>
            <person name="Nierman W.C."/>
            <person name="Havlak P.H."/>
            <person name="Chen R."/>
            <person name="Durbin K.J."/>
            <person name="Egan A."/>
            <person name="Ren Y."/>
            <person name="Song X.-Z."/>
            <person name="Li B."/>
            <person name="Liu Y."/>
            <person name="Qin X."/>
            <person name="Cawley S."/>
            <person name="Cooney A.J."/>
            <person name="D'Souza L.M."/>
            <person name="Martin K."/>
            <person name="Wu J.Q."/>
            <person name="Gonzalez-Garay M.L."/>
            <person name="Jackson A.R."/>
            <person name="Kalafus K.J."/>
            <person name="McLeod M.P."/>
            <person name="Milosavljevic A."/>
            <person name="Virk D."/>
            <person name="Volkov A."/>
            <person name="Wheeler D.A."/>
            <person name="Zhang Z."/>
            <person name="Bailey J.A."/>
            <person name="Eichler E.E."/>
            <person name="Tuzun E."/>
            <person name="Birney E."/>
            <person name="Mongin E."/>
            <person name="Ureta-Vidal A."/>
            <person name="Woodwark C."/>
            <person name="Zdobnov E."/>
            <person name="Bork P."/>
            <person name="Suyama M."/>
            <person name="Torrents D."/>
            <person name="Alexandersson M."/>
            <person name="Trask B.J."/>
            <person name="Young J.M."/>
            <person name="Huang H."/>
            <person name="Wang H."/>
            <person name="Xing H."/>
            <person name="Daniels S."/>
            <person name="Gietzen D."/>
            <person name="Schmidt J."/>
            <person name="Stevens K."/>
            <person name="Vitt U."/>
            <person name="Wingrove J."/>
            <person name="Camara F."/>
            <person name="Mar Alba M."/>
            <person name="Abril J.F."/>
            <person name="Guigo R."/>
            <person name="Smit A."/>
            <person name="Dubchak I."/>
            <person name="Rubin E.M."/>
            <person name="Couronne O."/>
            <person name="Poliakov A."/>
            <person name="Huebner N."/>
            <person name="Ganten D."/>
            <person name="Goesele C."/>
            <person name="Hummel O."/>
            <person name="Kreitler T."/>
            <person name="Lee Y.-A."/>
            <person name="Monti J."/>
            <person name="Schulz H."/>
            <person name="Zimdahl H."/>
            <person name="Himmelbauer H."/>
            <person name="Lehrach H."/>
            <person name="Jacob H.J."/>
            <person name="Bromberg S."/>
            <person name="Gullings-Handley J."/>
            <person name="Jensen-Seaman M.I."/>
            <person name="Kwitek A.E."/>
            <person name="Lazar J."/>
            <person name="Pasko D."/>
            <person name="Tonellato P.J."/>
            <person name="Twigger S."/>
            <person name="Ponting C.P."/>
            <person name="Duarte J.M."/>
            <person name="Rice S."/>
            <person name="Goodstadt L."/>
            <person name="Beatson S.A."/>
            <person name="Emes R.D."/>
            <person name="Winter E.E."/>
            <person name="Webber C."/>
            <person name="Brandt P."/>
            <person name="Nyakatura G."/>
            <person name="Adetobi M."/>
            <person name="Chiaromonte F."/>
            <person name="Elnitski L."/>
            <person name="Eswara P."/>
            <person name="Hardison R.C."/>
            <person name="Hou M."/>
            <person name="Kolbe D."/>
            <person name="Makova K."/>
            <person name="Miller W."/>
            <person name="Nekrutenko A."/>
            <person name="Riemer C."/>
            <person name="Schwartz S."/>
            <person name="Taylor J."/>
            <person name="Yang S."/>
            <person name="Zhang Y."/>
            <person name="Lindpaintner K."/>
            <person name="Andrews T.D."/>
            <person name="Caccamo M."/>
            <person name="Clamp M."/>
            <person name="Clarke L."/>
            <person name="Curwen V."/>
            <person name="Durbin R.M."/>
            <person name="Eyras E."/>
            <person name="Searle S.M."/>
            <person name="Cooper G.M."/>
            <person name="Batzoglou S."/>
            <person name="Brudno M."/>
            <person name="Sidow A."/>
            <person name="Stone E.A."/>
            <person name="Payseur B.A."/>
            <person name="Bourque G."/>
            <person name="Lopez-Otin C."/>
            <person name="Puente X.S."/>
            <person name="Chakrabarti K."/>
            <person name="Chatterji S."/>
            <person name="Dewey C."/>
            <person name="Pachter L."/>
            <person name="Bray N."/>
            <person name="Yap V.B."/>
            <person name="Caspi A."/>
            <person name="Tesler G."/>
            <person name="Pevzner P.A."/>
            <person name="Haussler D."/>
            <person name="Roskin K.M."/>
            <person name="Baertsch R."/>
            <person name="Clawson H."/>
            <person name="Furey T.S."/>
            <person name="Hinrichs A.S."/>
            <person name="Karolchik D."/>
            <person name="Kent W.J."/>
            <person name="Rosenbloom K.R."/>
            <person name="Trumbower H."/>
            <person name="Weirauch M."/>
            <person name="Cooper D.N."/>
            <person name="Stenson P.D."/>
            <person name="Ma B."/>
            <person name="Brent M."/>
            <person name="Arumugam M."/>
            <person name="Shteynberg D."/>
            <person name="Copley R.R."/>
            <person name="Taylor M.S."/>
            <person name="Riethman H."/>
            <person name="Mudunuri U."/>
            <person name="Peterson J."/>
            <person name="Guyer M."/>
            <person name="Felsenfeld A."/>
            <person name="Old S."/>
            <person name="Mockrin S."/>
            <person name="Collins F.S."/>
        </authorList>
    </citation>
    <scope>NUCLEOTIDE SEQUENCE [LARGE SCALE GENOMIC DNA]</scope>
    <source>
        <strain>Brown Norway</strain>
    </source>
</reference>
<reference key="3">
    <citation type="submission" date="2005-07" db="EMBL/GenBank/DDBJ databases">
        <authorList>
            <person name="Mural R.J."/>
            <person name="Adams M.D."/>
            <person name="Myers E.W."/>
            <person name="Smith H.O."/>
            <person name="Venter J.C."/>
        </authorList>
    </citation>
    <scope>NUCLEOTIDE SEQUENCE [LARGE SCALE GENOMIC DNA]</scope>
    <source>
        <strain>Brown Norway</strain>
    </source>
</reference>
<reference key="4">
    <citation type="journal article" date="1999" name="Cell">
        <title>A ligand-gated association between cytoplasmic domains of UNC5 and DCC family receptors converts netrin-induced growth cone attraction to repulsion.</title>
        <authorList>
            <person name="Hong K."/>
            <person name="Hinck L."/>
            <person name="Nishiyama M."/>
            <person name="Poo M.-M."/>
            <person name="Tessier-Lavigne M."/>
            <person name="Stein E."/>
        </authorList>
    </citation>
    <scope>INTERACTION WITH UNC5A; UNC5B AND UNC5C</scope>
</reference>
<reference key="5">
    <citation type="journal article" date="2013" name="J. Proteome Res.">
        <title>Site-specific glycan-peptide analysis for determination of N-glycoproteome heterogeneity.</title>
        <authorList>
            <person name="Parker B.L."/>
            <person name="Thaysen-Andersen M."/>
            <person name="Solis N."/>
            <person name="Scott N.E."/>
            <person name="Larsen M.R."/>
            <person name="Graham M.E."/>
            <person name="Packer N.H."/>
            <person name="Cordwell S.J."/>
        </authorList>
    </citation>
    <scope>GLYCOSYLATION [LARGE SCALE ANALYSIS] AT ASN-478</scope>
    <scope>IDENTIFICATION BY MASS SPECTROMETRY [LARGE SCALE ANALYSIS]</scope>
    <source>
        <tissue>Brain</tissue>
    </source>
</reference>
<reference key="6">
    <citation type="submission" date="2010-01" db="PDB data bank">
        <title>Structure of DCC and the prediction of N-terminal horseshoe configuration in other neural receptors.</title>
        <authorList>
            <person name="Chen Q."/>
            <person name="Liu J.-H."/>
            <person name="Wang J.-H."/>
        </authorList>
    </citation>
    <scope>X-RAY CRYSTALLOGRAPHY (2.40 ANGSTROMS) OF 39-421</scope>
    <scope>DISULFIDE BONDS</scope>
    <scope>GLYCOSYLATION AT ASN-60; ASN-94; ASN-299 AND ASN-318</scope>
</reference>
<reference key="7">
    <citation type="journal article" date="2010" name="Structure">
        <title>Phosphorylation of DCC by ERK2 is facilitated by direct docking of the receptor P1 domain to the kinase.</title>
        <authorList>
            <person name="Ma W."/>
            <person name="Shang Y."/>
            <person name="Wei Z."/>
            <person name="Wen W."/>
            <person name="Wang W."/>
            <person name="Zhang M."/>
        </authorList>
    </citation>
    <scope>X-RAY CRYSTALLOGRAPHY (1.95 ANGSTROMS) OF 1140-1166 IN COMPLEX WITH MAPK1</scope>
    <scope>INTERACTION WITH MAPK1</scope>
    <scope>PHOSPHORYLATION AT SER-1178; THR-1187 AND SER-1267</scope>
    <scope>MUTAGENESIS OF SER-1178; THR-1187 AND SER-1267</scope>
</reference>
<proteinExistence type="evidence at protein level"/>
<accession>Q63155</accession>
<comment type="function">
    <text evidence="1 10">Receptor for netrin required for axon guidance. Mediates axon attraction of neuronal growth cones in the developing nervous system upon ligand binding. Its association with UNC5 proteins may trigger signaling for axon repulsion. It also acts as a dependence receptor required for apoptosis induction when not associated with netrin ligand. Implicated as a tumor suppressor gene (By similarity).</text>
</comment>
<comment type="subunit">
    <text evidence="2 3 8 9 10">Interacts with the cytoplasmic part of UNC5A, UNC5B and UNC5C (PubMed:10399920). Interacts with DSCAM (By similarity). Interacts with PTK2/FAK1 (By similarity). Interacts with MYO10 (By similarity). Interacts with MAPK1 (PubMed:21070949). Interacts with NTN1 (PubMed:8861902). Interacts with CBLN4; this interaction can be competed by NTN1 (By similarity). Interacts with SIAH1 and SIAH2 (By similarity).</text>
</comment>
<comment type="interaction">
    <interactant intactId="EBI-1798965">
        <id>Q63155</id>
    </interactant>
    <interactant intactId="EBI-4409108">
        <id>Q8CGU4</id>
        <label>Agap2</label>
    </interactant>
    <organismsDiffer>false</organismsDiffer>
    <experiments>2</experiments>
</comment>
<comment type="interaction">
    <interactant intactId="EBI-1798965">
        <id>Q63155</id>
    </interactant>
    <interactant intactId="EBI-1798965">
        <id>Q63155</id>
        <label>Dcc</label>
    </interactant>
    <organismsDiffer>false</organismsDiffer>
    <experiments>2</experiments>
</comment>
<comment type="interaction">
    <interactant intactId="EBI-1798965">
        <id>Q63155</id>
    </interactant>
    <interactant intactId="EBI-917242">
        <id>P31977</id>
        <label>Ezr</label>
    </interactant>
    <organismsDiffer>false</organismsDiffer>
    <experiments>2</experiments>
</comment>
<comment type="interaction">
    <interactant intactId="EBI-1798965">
        <id>Q63155</id>
    </interactant>
    <interactant intactId="EBI-397710">
        <id>P63086</id>
        <label>Mapk1</label>
    </interactant>
    <organismsDiffer>false</organismsDiffer>
    <experiments>10</experiments>
</comment>
<comment type="interaction">
    <interactant intactId="EBI-1798965">
        <id>Q63155</id>
    </interactant>
    <interactant intactId="EBI-3505237">
        <id>O55005</id>
        <label>Robo1</label>
    </interactant>
    <organismsDiffer>false</organismsDiffer>
    <experiments>2</experiments>
</comment>
<comment type="interaction">
    <interactant intactId="EBI-1798965">
        <id>Q63155</id>
    </interactant>
    <interactant intactId="EBI-1798601">
        <id>Q9ERC8</id>
        <label>Dscam</label>
    </interactant>
    <organismsDiffer>true</organismsDiffer>
    <experiments>4</experiments>
</comment>
<comment type="interaction">
    <interactant intactId="EBI-1798965">
        <id>Q63155</id>
    </interactant>
    <interactant intactId="EBI-1056902">
        <id>P15311</id>
        <label>EZR</label>
    </interactant>
    <organismsDiffer>true</organismsDiffer>
    <experiments>3</experiments>
</comment>
<comment type="interaction">
    <interactant intactId="EBI-1798965">
        <id>Q63155</id>
    </interactant>
    <interactant intactId="EBI-307061">
        <id>Q9HD67</id>
        <label>MYO10</label>
    </interactant>
    <organismsDiffer>true</organismsDiffer>
    <experiments>3</experiments>
</comment>
<comment type="interaction">
    <interactant intactId="EBI-1798965">
        <id>Q63155</id>
    </interactant>
    <interactant intactId="EBI-358018">
        <id>P46777</id>
        <label>RPL5</label>
    </interactant>
    <organismsDiffer>true</organismsDiffer>
    <experiments>4</experiments>
</comment>
<comment type="subcellular location">
    <subcellularLocation>
        <location evidence="10">Membrane</location>
        <topology evidence="10">Single-pass type I membrane protein</topology>
    </subcellularLocation>
</comment>
<comment type="tissue specificity">
    <text evidence="10">Detected in embryonic spinal cord, predominantly in axons of commissural neurons (at protein level). Detected in embryonic spinal cord.</text>
</comment>
<comment type="PTM">
    <text evidence="2">Ubiquitinated; mediated by SIAH1 or SIAH2 and leading to its subsequent proteasomal degradation.</text>
</comment>
<comment type="similarity">
    <text evidence="12">Belongs to the immunoglobulin superfamily. DCC family.</text>
</comment>
<feature type="signal peptide" evidence="4">
    <location>
        <begin position="1"/>
        <end position="25"/>
    </location>
</feature>
<feature type="chain" id="PRO_0000416246" description="Netrin receptor DCC">
    <location>
        <begin position="26"/>
        <end position="1445"/>
    </location>
</feature>
<feature type="transmembrane region" description="Helical" evidence="4">
    <location>
        <begin position="1100"/>
        <end position="1120"/>
    </location>
</feature>
<feature type="domain" description="Ig-like C2-type 1">
    <location>
        <begin position="26"/>
        <end position="135"/>
    </location>
</feature>
<feature type="domain" description="Ig-like C2-type 2">
    <location>
        <begin position="139"/>
        <end position="229"/>
    </location>
</feature>
<feature type="domain" description="Ig-like C2-type 3">
    <location>
        <begin position="234"/>
        <end position="326"/>
    </location>
</feature>
<feature type="domain" description="Ig-like C2-type 4">
    <location>
        <begin position="331"/>
        <end position="416"/>
    </location>
</feature>
<feature type="domain" description="Fibronectin type-III 1" evidence="6">
    <location>
        <begin position="431"/>
        <end position="524"/>
    </location>
</feature>
<feature type="domain" description="Fibronectin type-III 2" evidence="6">
    <location>
        <begin position="530"/>
        <end position="620"/>
    </location>
</feature>
<feature type="domain" description="Fibronectin type-III 3" evidence="6">
    <location>
        <begin position="625"/>
        <end position="718"/>
    </location>
</feature>
<feature type="domain" description="Fibronectin type-III 4" evidence="6">
    <location>
        <begin position="728"/>
        <end position="821"/>
    </location>
</feature>
<feature type="domain" description="Fibronectin type-III 5" evidence="6">
    <location>
        <begin position="846"/>
        <end position="942"/>
    </location>
</feature>
<feature type="domain" description="Fibronectin type-III 6" evidence="6">
    <location>
        <begin position="947"/>
        <end position="1044"/>
    </location>
</feature>
<feature type="region of interest" description="Disordered" evidence="7">
    <location>
        <begin position="1126"/>
        <end position="1152"/>
    </location>
</feature>
<feature type="region of interest" description="Disordered" evidence="7">
    <location>
        <begin position="1167"/>
        <end position="1220"/>
    </location>
</feature>
<feature type="region of interest" description="Disordered" evidence="7">
    <location>
        <begin position="1292"/>
        <end position="1327"/>
    </location>
</feature>
<feature type="region of interest" description="Disordered" evidence="7">
    <location>
        <begin position="1392"/>
        <end position="1417"/>
    </location>
</feature>
<feature type="compositionally biased region" description="Basic residues" evidence="7">
    <location>
        <begin position="1129"/>
        <end position="1143"/>
    </location>
</feature>
<feature type="compositionally biased region" description="Polar residues" evidence="7">
    <location>
        <begin position="1179"/>
        <end position="1220"/>
    </location>
</feature>
<feature type="modified residue" description="Phosphoserine; by MAPK1" evidence="9">
    <location>
        <position position="1178"/>
    </location>
</feature>
<feature type="modified residue" description="Phosphothreonine; by MAPK1" evidence="9">
    <location>
        <position position="1187"/>
    </location>
</feature>
<feature type="modified residue" description="Phosphoserine; by MAPK1" evidence="9">
    <location>
        <position position="1267"/>
    </location>
</feature>
<feature type="glycosylation site" description="N-linked (GlcNAc...) asparagine" evidence="11">
    <location>
        <position position="60"/>
    </location>
</feature>
<feature type="glycosylation site" description="N-linked (GlcNAc...) asparagine" evidence="11">
    <location>
        <position position="94"/>
    </location>
</feature>
<feature type="glycosylation site" description="N-linked (GlcNAc...) asparagine" evidence="11">
    <location>
        <position position="299"/>
    </location>
</feature>
<feature type="glycosylation site" description="N-linked (GlcNAc...) asparagine" evidence="11">
    <location>
        <position position="318"/>
    </location>
</feature>
<feature type="glycosylation site" description="N-linked (GlcNAc...) asparagine" evidence="13">
    <location>
        <position position="478"/>
    </location>
</feature>
<feature type="glycosylation site" description="N-linked (GlcNAc...) asparagine" evidence="4">
    <location>
        <position position="628"/>
    </location>
</feature>
<feature type="glycosylation site" description="N-linked (GlcNAc...) asparagine" evidence="4">
    <location>
        <position position="702"/>
    </location>
</feature>
<feature type="disulfide bond" evidence="5 11">
    <location>
        <begin position="61"/>
        <end position="117"/>
    </location>
</feature>
<feature type="disulfide bond" evidence="5 11">
    <location>
        <begin position="161"/>
        <end position="212"/>
    </location>
</feature>
<feature type="disulfide bond" evidence="5 11">
    <location>
        <begin position="261"/>
        <end position="310"/>
    </location>
</feature>
<feature type="disulfide bond" evidence="5 11">
    <location>
        <begin position="352"/>
        <end position="400"/>
    </location>
</feature>
<feature type="mutagenesis site" description="Abolishes phosphorylation by MAPK1; when associated with A-1187 and A-1267." evidence="9">
    <original>S</original>
    <variation>A</variation>
    <location>
        <position position="1178"/>
    </location>
</feature>
<feature type="mutagenesis site" description="Abolishes phosphorylation by MAPK1; when associated with A-1178 and A-1267." evidence="9">
    <original>T</original>
    <variation>A</variation>
    <location>
        <position position="1187"/>
    </location>
</feature>
<feature type="mutagenesis site" description="Abolishes phosphorylation by MAPK1; when associated with A-1178 and A-1187." evidence="9">
    <original>S</original>
    <variation>A</variation>
    <location>
        <position position="1267"/>
    </location>
</feature>
<feature type="strand" evidence="14">
    <location>
        <begin position="39"/>
        <end position="44"/>
    </location>
</feature>
<feature type="strand" evidence="14">
    <location>
        <begin position="49"/>
        <end position="51"/>
    </location>
</feature>
<feature type="strand" evidence="14">
    <location>
        <begin position="57"/>
        <end position="59"/>
    </location>
</feature>
<feature type="strand" evidence="14">
    <location>
        <begin position="62"/>
        <end position="64"/>
    </location>
</feature>
<feature type="strand" evidence="14">
    <location>
        <begin position="71"/>
        <end position="76"/>
    </location>
</feature>
<feature type="strand" evidence="14">
    <location>
        <begin position="89"/>
        <end position="91"/>
    </location>
</feature>
<feature type="strand" evidence="14">
    <location>
        <begin position="97"/>
        <end position="99"/>
    </location>
</feature>
<feature type="strand" evidence="14">
    <location>
        <begin position="113"/>
        <end position="120"/>
    </location>
</feature>
<feature type="helix" evidence="14">
    <location>
        <begin position="122"/>
        <end position="124"/>
    </location>
</feature>
<feature type="strand" evidence="14">
    <location>
        <begin position="126"/>
        <end position="128"/>
    </location>
</feature>
<feature type="strand" evidence="14">
    <location>
        <begin position="132"/>
        <end position="136"/>
    </location>
</feature>
<feature type="strand" evidence="15">
    <location>
        <begin position="141"/>
        <end position="144"/>
    </location>
</feature>
<feature type="strand" evidence="14">
    <location>
        <begin position="149"/>
        <end position="152"/>
    </location>
</feature>
<feature type="strand" evidence="14">
    <location>
        <begin position="157"/>
        <end position="159"/>
    </location>
</feature>
<feature type="strand" evidence="14">
    <location>
        <begin position="170"/>
        <end position="179"/>
    </location>
</feature>
<feature type="strand" evidence="14">
    <location>
        <begin position="188"/>
        <end position="191"/>
    </location>
</feature>
<feature type="strand" evidence="14">
    <location>
        <begin position="197"/>
        <end position="199"/>
    </location>
</feature>
<feature type="helix" evidence="14">
    <location>
        <begin position="204"/>
        <end position="206"/>
    </location>
</feature>
<feature type="strand" evidence="14">
    <location>
        <begin position="208"/>
        <end position="215"/>
    </location>
</feature>
<feature type="strand" evidence="15">
    <location>
        <begin position="219"/>
        <end position="222"/>
    </location>
</feature>
<feature type="strand" evidence="14">
    <location>
        <begin position="226"/>
        <end position="231"/>
    </location>
</feature>
<feature type="strand" evidence="14">
    <location>
        <begin position="238"/>
        <end position="244"/>
    </location>
</feature>
<feature type="strand" evidence="14">
    <location>
        <begin position="249"/>
        <end position="252"/>
    </location>
</feature>
<feature type="strand" evidence="14">
    <location>
        <begin position="257"/>
        <end position="259"/>
    </location>
</feature>
<feature type="strand" evidence="14">
    <location>
        <begin position="262"/>
        <end position="267"/>
    </location>
</feature>
<feature type="strand" evidence="14">
    <location>
        <begin position="270"/>
        <end position="275"/>
    </location>
</feature>
<feature type="strand" evidence="14">
    <location>
        <begin position="283"/>
        <end position="290"/>
    </location>
</feature>
<feature type="turn" evidence="14">
    <location>
        <begin position="291"/>
        <end position="293"/>
    </location>
</feature>
<feature type="strand" evidence="14">
    <location>
        <begin position="294"/>
        <end position="297"/>
    </location>
</feature>
<feature type="helix" evidence="14">
    <location>
        <begin position="302"/>
        <end position="304"/>
    </location>
</feature>
<feature type="strand" evidence="14">
    <location>
        <begin position="306"/>
        <end position="314"/>
    </location>
</feature>
<feature type="strand" evidence="14">
    <location>
        <begin position="317"/>
        <end position="335"/>
    </location>
</feature>
<feature type="strand" evidence="14">
    <location>
        <begin position="348"/>
        <end position="350"/>
    </location>
</feature>
<feature type="strand" evidence="14">
    <location>
        <begin position="353"/>
        <end position="358"/>
    </location>
</feature>
<feature type="strand" evidence="14">
    <location>
        <begin position="361"/>
        <end position="366"/>
    </location>
</feature>
<feature type="strand" evidence="14">
    <location>
        <begin position="374"/>
        <end position="380"/>
    </location>
</feature>
<feature type="turn" evidence="14">
    <location>
        <begin position="381"/>
        <end position="383"/>
    </location>
</feature>
<feature type="strand" evidence="14">
    <location>
        <begin position="384"/>
        <end position="389"/>
    </location>
</feature>
<feature type="helix" evidence="14">
    <location>
        <begin position="392"/>
        <end position="394"/>
    </location>
</feature>
<feature type="strand" evidence="14">
    <location>
        <begin position="396"/>
        <end position="404"/>
    </location>
</feature>
<feature type="strand" evidence="14">
    <location>
        <begin position="407"/>
        <end position="416"/>
    </location>
</feature>
<feature type="helix" evidence="16">
    <location>
        <begin position="1422"/>
        <end position="1437"/>
    </location>
</feature>
<sequence>MENSLGCVWVPKLAFVLFGASLLSAHLQVTGFQIKPFTSLHFVSEPSDAVTMRGGNVLLNCSAESDRGVPVIKWKKDGLILALGMDDRKQQLPNGSLLIQNILHSRHHKPDEGLYQCEASLGDSGSIISRTAKVMVAGPLRFLSQTESITAFMGDTVLLKCEVIGDPMPTIHWQKNQQDLNPIPGDSRVVVLPSGALQISRLQPGDSGVYRCSARNPASTRTGNEAEVRILSDPGLHRQLYFLQRPSNVIAIEGKDAVLECCVSGYPPPSFTWLRGEEVIQLRSKKYSLLGGSNLLISNVTDDDSGTYTCVVTYKNENISASAELTVLVPPWFLNHPSNLYAYESMDIEFECAVSGKPVPTVNWMKNGDVVIPSDYFQIVGGSNLRILGVVKSDEGFYQCVAENEAGNAQSSAQLIVPKPAIPSSSILPSAPRDVVPVLVSSRFVRLSWRPPAEAKGNIQTFTVFFSREGDNRERALNTTQPGSLQLTVGNLKPEAMYTFRVVAYNEWGPGESSQPIKVATQPELQVPGPVENLHAVSASPTSILITWEPPAYANGPVQGYRLFCTEVSTGKEQNIEVDGLSYKLEGLKKFTEYTLRFLAYNRYGPGVSTDDITVVTLSDVPSAPPQNVSLEVVNSRSIKVSWLPPPSGTQNGFITGYKIRHRKTTRRGEMETLEPNNLWYLFTGLEKGSQYSFQVSAMTVNGTGPPSNWYTAETPENDLDESQVPDQPSSLHVRPQTNCIIMSWTPPLNPNIVVRGYIIGYGVGSPYAETVRVDSKQRYYSIERLESSSHYVISLKAFNNAGEGVPLYESATTRSITDPTDPVDYYPLLDDFPTSGPDVSTPMLPPVGVQAVALTHEAVRVSWADNSVPKNQKTSDVRLYTVRWRTSFSASAKYKSEDTTSLSYTATGLKPNTMYEFSVMVTKNRRSSTWSMTAHATTYEAAPTSAPKDLTVITREGKPRAVIVSWQPPLEANGKITAYILFYTLDKNIPIDDWIMETISGDRLTHQIMDLSLDTMYYFRIQARNAKGVGPLSDPILFRTLKVEHPDKMANDQGRHGDGGYWPVDTNLIDRSTLNEPPIGQMHPPHGSVTPQKNSNLLVITVVTVGVLTVLVVVIVAVICTRRSSAQQRKKRATHSASKRKGSQKDLRPPDLWIHHEEMEMKNIEKPAGTDPAGRGSPIQSCQDLTPVSHSQSESQMGSKSASHSGQDTEEAGSSMSTLERSLAARRATRTKLMIPMEAQSNNPAVVSAIPVPTLESAQYPGILPSPTCGYPHPQFTLRPVPFPTLSVDRGFGAGRTVSEGPTAQQQPMLPPAQPEHPSSEEAPSRTIPTACVRPTHPLRSFANPLLPPPMSAIEPKVPYTPLLSQPGPTLPKTHVKTASLGLAGKARSPLLPVSVPTAPEVSEESHKPTEDPASVYEQDDLSEQMASLEGLMKQLNAITGSAF</sequence>
<protein>
    <recommendedName>
        <fullName>Netrin receptor DCC</fullName>
    </recommendedName>
    <alternativeName>
        <fullName>Tumor suppressor protein DCC</fullName>
    </alternativeName>
</protein>
<dbReference type="EMBL" id="U68725">
    <property type="protein sequence ID" value="AAB41099.1"/>
    <property type="molecule type" value="mRNA"/>
</dbReference>
<dbReference type="EMBL" id="CH473971">
    <property type="protein sequence ID" value="EDM14792.1"/>
    <property type="molecule type" value="Genomic_DNA"/>
</dbReference>
<dbReference type="RefSeq" id="NP_036973.1">
    <property type="nucleotide sequence ID" value="NM_012841.2"/>
</dbReference>
<dbReference type="PDB" id="3LAF">
    <property type="method" value="X-ray"/>
    <property type="resolution" value="2.40 A"/>
    <property type="chains" value="A=39-421"/>
</dbReference>
<dbReference type="PDB" id="3O71">
    <property type="method" value="X-ray"/>
    <property type="resolution" value="1.95 A"/>
    <property type="chains" value="B=1140-1166"/>
</dbReference>
<dbReference type="PDB" id="5Z5K">
    <property type="method" value="X-ray"/>
    <property type="resolution" value="2.49 A"/>
    <property type="chains" value="A=39-418"/>
</dbReference>
<dbReference type="PDB" id="6BZ3">
    <property type="method" value="X-ray"/>
    <property type="resolution" value="2.50 A"/>
    <property type="chains" value="B/D=1421-1443"/>
</dbReference>
<dbReference type="PDBsum" id="3LAF"/>
<dbReference type="PDBsum" id="3O71"/>
<dbReference type="PDBsum" id="5Z5K"/>
<dbReference type="PDBsum" id="6BZ3"/>
<dbReference type="SMR" id="Q63155"/>
<dbReference type="DIP" id="DIP-46811N"/>
<dbReference type="ELM" id="Q63155"/>
<dbReference type="FunCoup" id="Q63155">
    <property type="interactions" value="998"/>
</dbReference>
<dbReference type="IntAct" id="Q63155">
    <property type="interactions" value="15"/>
</dbReference>
<dbReference type="STRING" id="10116.ENSRNOP00000063072"/>
<dbReference type="GlyCosmos" id="Q63155">
    <property type="glycosylation" value="7 sites, 2 glycans"/>
</dbReference>
<dbReference type="GlyGen" id="Q63155">
    <property type="glycosylation" value="10 sites, 2 N-linked glycans (1 site)"/>
</dbReference>
<dbReference type="iPTMnet" id="Q63155"/>
<dbReference type="PhosphoSitePlus" id="Q63155"/>
<dbReference type="PaxDb" id="10116-ENSRNOP00000063072"/>
<dbReference type="GeneID" id="25311"/>
<dbReference type="KEGG" id="rno:25311"/>
<dbReference type="AGR" id="RGD:2492"/>
<dbReference type="CTD" id="1630"/>
<dbReference type="RGD" id="2492">
    <property type="gene designation" value="Dcc"/>
</dbReference>
<dbReference type="eggNOG" id="KOG4221">
    <property type="taxonomic scope" value="Eukaryota"/>
</dbReference>
<dbReference type="InParanoid" id="Q63155"/>
<dbReference type="TreeFam" id="TF321506"/>
<dbReference type="Reactome" id="R-RNO-373752">
    <property type="pathway name" value="Netrin-1 signaling"/>
</dbReference>
<dbReference type="Reactome" id="R-RNO-418885">
    <property type="pathway name" value="DCC mediated attractive signaling"/>
</dbReference>
<dbReference type="Reactome" id="R-RNO-418889">
    <property type="pathway name" value="Caspase activation via Dependence Receptors in the absence of ligand"/>
</dbReference>
<dbReference type="EvolutionaryTrace" id="Q63155"/>
<dbReference type="PRO" id="PR:Q63155"/>
<dbReference type="Proteomes" id="UP000002494">
    <property type="component" value="Unplaced"/>
</dbReference>
<dbReference type="Proteomes" id="UP000234681">
    <property type="component" value="Chromosome 18"/>
</dbReference>
<dbReference type="GO" id="GO:0030424">
    <property type="term" value="C:axon"/>
    <property type="evidence" value="ECO:0000314"/>
    <property type="project" value="RGD"/>
</dbReference>
<dbReference type="GO" id="GO:0009986">
    <property type="term" value="C:cell surface"/>
    <property type="evidence" value="ECO:0000318"/>
    <property type="project" value="GO_Central"/>
</dbReference>
<dbReference type="GO" id="GO:0032584">
    <property type="term" value="C:growth cone membrane"/>
    <property type="evidence" value="ECO:0000314"/>
    <property type="project" value="RGD"/>
</dbReference>
<dbReference type="GO" id="GO:0005886">
    <property type="term" value="C:plasma membrane"/>
    <property type="evidence" value="ECO:0000318"/>
    <property type="project" value="GO_Central"/>
</dbReference>
<dbReference type="GO" id="GO:0098839">
    <property type="term" value="C:postsynaptic density membrane"/>
    <property type="evidence" value="ECO:0000266"/>
    <property type="project" value="RGD"/>
</dbReference>
<dbReference type="GO" id="GO:0098685">
    <property type="term" value="C:Schaffer collateral - CA1 synapse"/>
    <property type="evidence" value="ECO:0000266"/>
    <property type="project" value="RGD"/>
</dbReference>
<dbReference type="GO" id="GO:0042802">
    <property type="term" value="F:identical protein binding"/>
    <property type="evidence" value="ECO:0000353"/>
    <property type="project" value="IntAct"/>
</dbReference>
<dbReference type="GO" id="GO:0005042">
    <property type="term" value="F:netrin receptor activity"/>
    <property type="evidence" value="ECO:0000315"/>
    <property type="project" value="RGD"/>
</dbReference>
<dbReference type="GO" id="GO:0003713">
    <property type="term" value="F:transcription coactivator activity"/>
    <property type="evidence" value="ECO:0000315"/>
    <property type="project" value="RGD"/>
</dbReference>
<dbReference type="GO" id="GO:0033564">
    <property type="term" value="P:anterior/posterior axon guidance"/>
    <property type="evidence" value="ECO:0000266"/>
    <property type="project" value="RGD"/>
</dbReference>
<dbReference type="GO" id="GO:0006915">
    <property type="term" value="P:apoptotic process"/>
    <property type="evidence" value="ECO:0007669"/>
    <property type="project" value="UniProtKB-KW"/>
</dbReference>
<dbReference type="GO" id="GO:0061564">
    <property type="term" value="P:axon development"/>
    <property type="evidence" value="ECO:0000270"/>
    <property type="project" value="RGD"/>
</dbReference>
<dbReference type="GO" id="GO:0007411">
    <property type="term" value="P:axon guidance"/>
    <property type="evidence" value="ECO:0000315"/>
    <property type="project" value="RGD"/>
</dbReference>
<dbReference type="GO" id="GO:0098609">
    <property type="term" value="P:cell-cell adhesion"/>
    <property type="evidence" value="ECO:0000318"/>
    <property type="project" value="GO_Central"/>
</dbReference>
<dbReference type="GO" id="GO:0021987">
    <property type="term" value="P:cerebral cortex development"/>
    <property type="evidence" value="ECO:0000270"/>
    <property type="project" value="RGD"/>
</dbReference>
<dbReference type="GO" id="GO:0022038">
    <property type="term" value="P:corpus callosum development"/>
    <property type="evidence" value="ECO:0000270"/>
    <property type="project" value="RGD"/>
</dbReference>
<dbReference type="GO" id="GO:0033563">
    <property type="term" value="P:dorsal/ventral axon guidance"/>
    <property type="evidence" value="ECO:0000266"/>
    <property type="project" value="RGD"/>
</dbReference>
<dbReference type="GO" id="GO:0001764">
    <property type="term" value="P:neuron migration"/>
    <property type="evidence" value="ECO:0000266"/>
    <property type="project" value="RGD"/>
</dbReference>
<dbReference type="GO" id="GO:0021554">
    <property type="term" value="P:optic nerve development"/>
    <property type="evidence" value="ECO:0000270"/>
    <property type="project" value="RGD"/>
</dbReference>
<dbReference type="GO" id="GO:0070374">
    <property type="term" value="P:positive regulation of ERK1 and ERK2 cascade"/>
    <property type="evidence" value="ECO:0000315"/>
    <property type="project" value="RGD"/>
</dbReference>
<dbReference type="GO" id="GO:0010976">
    <property type="term" value="P:positive regulation of neuron projection development"/>
    <property type="evidence" value="ECO:0000315"/>
    <property type="project" value="RGD"/>
</dbReference>
<dbReference type="GO" id="GO:0099170">
    <property type="term" value="P:postsynaptic modulation of chemical synaptic transmission"/>
    <property type="evidence" value="ECO:0000266"/>
    <property type="project" value="RGD"/>
</dbReference>
<dbReference type="GO" id="GO:0001975">
    <property type="term" value="P:response to amphetamine"/>
    <property type="evidence" value="ECO:0000270"/>
    <property type="project" value="RGD"/>
</dbReference>
<dbReference type="GO" id="GO:0021965">
    <property type="term" value="P:spinal cord ventral commissure morphogenesis"/>
    <property type="evidence" value="ECO:0000266"/>
    <property type="project" value="RGD"/>
</dbReference>
<dbReference type="CDD" id="cd00063">
    <property type="entry name" value="FN3"/>
    <property type="match status" value="6"/>
</dbReference>
<dbReference type="CDD" id="cd00096">
    <property type="entry name" value="Ig"/>
    <property type="match status" value="1"/>
</dbReference>
<dbReference type="CDD" id="cd05722">
    <property type="entry name" value="IgI_1_Neogenin_like"/>
    <property type="match status" value="1"/>
</dbReference>
<dbReference type="CDD" id="cd05723">
    <property type="entry name" value="IgI_4_Neogenin_like"/>
    <property type="match status" value="1"/>
</dbReference>
<dbReference type="FunFam" id="2.60.40.10:FF:003668">
    <property type="match status" value="1"/>
</dbReference>
<dbReference type="FunFam" id="2.60.40.10:FF:000004">
    <property type="entry name" value="DCC isoform 1"/>
    <property type="match status" value="3"/>
</dbReference>
<dbReference type="FunFam" id="2.60.40.10:FF:000101">
    <property type="entry name" value="Neogenin isoform 1"/>
    <property type="match status" value="1"/>
</dbReference>
<dbReference type="FunFam" id="2.60.40.10:FF:000106">
    <property type="entry name" value="Neogenin isoform 1"/>
    <property type="match status" value="1"/>
</dbReference>
<dbReference type="FunFam" id="2.60.40.10:FF:000133">
    <property type="entry name" value="Neogenin isoform 1"/>
    <property type="match status" value="1"/>
</dbReference>
<dbReference type="FunFam" id="2.60.40.10:FF:000189">
    <property type="entry name" value="Neogenin isoform 3"/>
    <property type="match status" value="1"/>
</dbReference>
<dbReference type="FunFam" id="2.60.40.10:FF:000216">
    <property type="entry name" value="neogenin isoform X1"/>
    <property type="match status" value="1"/>
</dbReference>
<dbReference type="FunFam" id="2.60.40.10:FF:000187">
    <property type="entry name" value="neogenin isoform X2"/>
    <property type="match status" value="1"/>
</dbReference>
<dbReference type="Gene3D" id="2.60.40.10">
    <property type="entry name" value="Immunoglobulins"/>
    <property type="match status" value="10"/>
</dbReference>
<dbReference type="IDEAL" id="IID50334"/>
<dbReference type="InterPro" id="IPR003961">
    <property type="entry name" value="FN3_dom"/>
</dbReference>
<dbReference type="InterPro" id="IPR036116">
    <property type="entry name" value="FN3_sf"/>
</dbReference>
<dbReference type="InterPro" id="IPR007110">
    <property type="entry name" value="Ig-like_dom"/>
</dbReference>
<dbReference type="InterPro" id="IPR036179">
    <property type="entry name" value="Ig-like_dom_sf"/>
</dbReference>
<dbReference type="InterPro" id="IPR013783">
    <property type="entry name" value="Ig-like_fold"/>
</dbReference>
<dbReference type="InterPro" id="IPR013098">
    <property type="entry name" value="Ig_I-set"/>
</dbReference>
<dbReference type="InterPro" id="IPR003599">
    <property type="entry name" value="Ig_sub"/>
</dbReference>
<dbReference type="InterPro" id="IPR003598">
    <property type="entry name" value="Ig_sub2"/>
</dbReference>
<dbReference type="InterPro" id="IPR010560">
    <property type="entry name" value="Neogenin_C"/>
</dbReference>
<dbReference type="PANTHER" id="PTHR44170:SF8">
    <property type="entry name" value="NETRIN RECEPTOR DCC"/>
    <property type="match status" value="1"/>
</dbReference>
<dbReference type="PANTHER" id="PTHR44170">
    <property type="entry name" value="PROTEIN SIDEKICK"/>
    <property type="match status" value="1"/>
</dbReference>
<dbReference type="Pfam" id="PF00041">
    <property type="entry name" value="fn3"/>
    <property type="match status" value="6"/>
</dbReference>
<dbReference type="Pfam" id="PF07679">
    <property type="entry name" value="I-set"/>
    <property type="match status" value="3"/>
</dbReference>
<dbReference type="Pfam" id="PF13895">
    <property type="entry name" value="Ig_2"/>
    <property type="match status" value="1"/>
</dbReference>
<dbReference type="Pfam" id="PF06583">
    <property type="entry name" value="Neogenin_C"/>
    <property type="match status" value="1"/>
</dbReference>
<dbReference type="PRINTS" id="PR00014">
    <property type="entry name" value="FNTYPEIII"/>
</dbReference>
<dbReference type="SMART" id="SM00060">
    <property type="entry name" value="FN3"/>
    <property type="match status" value="6"/>
</dbReference>
<dbReference type="SMART" id="SM00409">
    <property type="entry name" value="IG"/>
    <property type="match status" value="5"/>
</dbReference>
<dbReference type="SMART" id="SM00408">
    <property type="entry name" value="IGc2"/>
    <property type="match status" value="4"/>
</dbReference>
<dbReference type="SUPFAM" id="SSF49265">
    <property type="entry name" value="Fibronectin type III"/>
    <property type="match status" value="4"/>
</dbReference>
<dbReference type="SUPFAM" id="SSF48726">
    <property type="entry name" value="Immunoglobulin"/>
    <property type="match status" value="4"/>
</dbReference>
<dbReference type="PROSITE" id="PS50853">
    <property type="entry name" value="FN3"/>
    <property type="match status" value="6"/>
</dbReference>
<dbReference type="PROSITE" id="PS50835">
    <property type="entry name" value="IG_LIKE"/>
    <property type="match status" value="4"/>
</dbReference>
<organism>
    <name type="scientific">Rattus norvegicus</name>
    <name type="common">Rat</name>
    <dbReference type="NCBI Taxonomy" id="10116"/>
    <lineage>
        <taxon>Eukaryota</taxon>
        <taxon>Metazoa</taxon>
        <taxon>Chordata</taxon>
        <taxon>Craniata</taxon>
        <taxon>Vertebrata</taxon>
        <taxon>Euteleostomi</taxon>
        <taxon>Mammalia</taxon>
        <taxon>Eutheria</taxon>
        <taxon>Euarchontoglires</taxon>
        <taxon>Glires</taxon>
        <taxon>Rodentia</taxon>
        <taxon>Myomorpha</taxon>
        <taxon>Muroidea</taxon>
        <taxon>Muridae</taxon>
        <taxon>Murinae</taxon>
        <taxon>Rattus</taxon>
    </lineage>
</organism>
<evidence type="ECO:0000250" key="1"/>
<evidence type="ECO:0000250" key="2">
    <source>
        <dbReference type="UniProtKB" id="P43146"/>
    </source>
</evidence>
<evidence type="ECO:0000250" key="3">
    <source>
        <dbReference type="UniProtKB" id="P70211"/>
    </source>
</evidence>
<evidence type="ECO:0000255" key="4"/>
<evidence type="ECO:0000255" key="5">
    <source>
        <dbReference type="PROSITE-ProRule" id="PRU00114"/>
    </source>
</evidence>
<evidence type="ECO:0000255" key="6">
    <source>
        <dbReference type="PROSITE-ProRule" id="PRU00316"/>
    </source>
</evidence>
<evidence type="ECO:0000256" key="7">
    <source>
        <dbReference type="SAM" id="MobiDB-lite"/>
    </source>
</evidence>
<evidence type="ECO:0000269" key="8">
    <source>
    </source>
</evidence>
<evidence type="ECO:0000269" key="9">
    <source>
    </source>
</evidence>
<evidence type="ECO:0000269" key="10">
    <source>
    </source>
</evidence>
<evidence type="ECO:0000269" key="11">
    <source ref="6"/>
</evidence>
<evidence type="ECO:0000305" key="12"/>
<evidence type="ECO:0007744" key="13">
    <source>
    </source>
</evidence>
<evidence type="ECO:0007829" key="14">
    <source>
        <dbReference type="PDB" id="3LAF"/>
    </source>
</evidence>
<evidence type="ECO:0007829" key="15">
    <source>
        <dbReference type="PDB" id="5Z5K"/>
    </source>
</evidence>
<evidence type="ECO:0007829" key="16">
    <source>
        <dbReference type="PDB" id="6BZ3"/>
    </source>
</evidence>
<name>DCC_RAT</name>
<keyword id="KW-0002">3D-structure</keyword>
<keyword id="KW-0053">Apoptosis</keyword>
<keyword id="KW-0217">Developmental protein</keyword>
<keyword id="KW-1015">Disulfide bond</keyword>
<keyword id="KW-0325">Glycoprotein</keyword>
<keyword id="KW-0393">Immunoglobulin domain</keyword>
<keyword id="KW-0472">Membrane</keyword>
<keyword id="KW-0597">Phosphoprotein</keyword>
<keyword id="KW-0675">Receptor</keyword>
<keyword id="KW-1185">Reference proteome</keyword>
<keyword id="KW-0677">Repeat</keyword>
<keyword id="KW-0732">Signal</keyword>
<keyword id="KW-0812">Transmembrane</keyword>
<keyword id="KW-1133">Transmembrane helix</keyword>
<keyword id="KW-0043">Tumor suppressor</keyword>
<keyword id="KW-0832">Ubl conjugation</keyword>